<gene>
    <name evidence="4" type="ordered locus">VPA0356</name>
</gene>
<comment type="function">
    <text evidence="2">Involved in the uptake of the osmoprotectant glycine betaine.</text>
</comment>
<comment type="subcellular location">
    <subcellularLocation>
        <location evidence="3">Cell inner membrane</location>
        <topology evidence="1">Multi-pass membrane protein</topology>
    </subcellularLocation>
</comment>
<comment type="induction">
    <text evidence="2">Induced by NaCl upshock.</text>
</comment>
<comment type="similarity">
    <text evidence="3">Belongs to the BCCT transporter (TC 2.A.15) family.</text>
</comment>
<evidence type="ECO:0000255" key="1"/>
<evidence type="ECO:0000269" key="2">
    <source>
    </source>
</evidence>
<evidence type="ECO:0000305" key="3"/>
<evidence type="ECO:0000312" key="4">
    <source>
        <dbReference type="EMBL" id="BAC61699.1"/>
    </source>
</evidence>
<accession>Q87J97</accession>
<protein>
    <recommendedName>
        <fullName evidence="3">Glycine betaine transporter 2</fullName>
    </recommendedName>
</protein>
<organism>
    <name type="scientific">Vibrio parahaemolyticus serotype O3:K6 (strain RIMD 2210633)</name>
    <dbReference type="NCBI Taxonomy" id="223926"/>
    <lineage>
        <taxon>Bacteria</taxon>
        <taxon>Pseudomonadati</taxon>
        <taxon>Pseudomonadota</taxon>
        <taxon>Gammaproteobacteria</taxon>
        <taxon>Vibrionales</taxon>
        <taxon>Vibrionaceae</taxon>
        <taxon>Vibrio</taxon>
    </lineage>
</organism>
<reference key="1">
    <citation type="journal article" date="2003" name="Lancet">
        <title>Genome sequence of Vibrio parahaemolyticus: a pathogenic mechanism distinct from that of V. cholerae.</title>
        <authorList>
            <person name="Makino K."/>
            <person name="Oshima K."/>
            <person name="Kurokawa K."/>
            <person name="Yokoyama K."/>
            <person name="Uda T."/>
            <person name="Tagomori K."/>
            <person name="Iijima Y."/>
            <person name="Najima M."/>
            <person name="Nakano M."/>
            <person name="Yamashita A."/>
            <person name="Kubota Y."/>
            <person name="Kimura S."/>
            <person name="Yasunaga T."/>
            <person name="Honda T."/>
            <person name="Shinagawa H."/>
            <person name="Hattori M."/>
            <person name="Iida T."/>
        </authorList>
    </citation>
    <scope>NUCLEOTIDE SEQUENCE [LARGE SCALE GENOMIC DNA]</scope>
    <source>
        <strain>RIMD 2210633</strain>
    </source>
</reference>
<reference key="2">
    <citation type="journal article" date="2015" name="Appl. Environ. Microbiol.">
        <title>Deciphering the role of multiple betaine-carnitine-choline transporters in the halophile Vibrio parahaemolyticus.</title>
        <authorList>
            <person name="Ongagna-Yhombi S.Y."/>
            <person name="McDonald N.D."/>
            <person name="Boyd E.F."/>
        </authorList>
    </citation>
    <scope>FUNCTION AS A TRANSPORTER</scope>
    <scope>INDUCTION</scope>
    <source>
        <strain>RIMD 2210633</strain>
    </source>
</reference>
<name>BCCT4_VIBPA</name>
<dbReference type="EMBL" id="BA000032">
    <property type="protein sequence ID" value="BAC61699.1"/>
    <property type="molecule type" value="Genomic_DNA"/>
</dbReference>
<dbReference type="RefSeq" id="NP_799866.1">
    <property type="nucleotide sequence ID" value="NC_004605.1"/>
</dbReference>
<dbReference type="SMR" id="Q87J97"/>
<dbReference type="KEGG" id="vpa:VPA0356"/>
<dbReference type="PATRIC" id="fig|223926.6.peg.3301"/>
<dbReference type="eggNOG" id="COG1292">
    <property type="taxonomic scope" value="Bacteria"/>
</dbReference>
<dbReference type="HOGENOM" id="CLU_010118_6_4_6"/>
<dbReference type="Proteomes" id="UP000002493">
    <property type="component" value="Chromosome 2"/>
</dbReference>
<dbReference type="GO" id="GO:0005886">
    <property type="term" value="C:plasma membrane"/>
    <property type="evidence" value="ECO:0007669"/>
    <property type="project" value="UniProtKB-SubCell"/>
</dbReference>
<dbReference type="GO" id="GO:0022857">
    <property type="term" value="F:transmembrane transporter activity"/>
    <property type="evidence" value="ECO:0007669"/>
    <property type="project" value="InterPro"/>
</dbReference>
<dbReference type="GO" id="GO:0006865">
    <property type="term" value="P:amino acid transport"/>
    <property type="evidence" value="ECO:0007669"/>
    <property type="project" value="UniProtKB-KW"/>
</dbReference>
<dbReference type="InterPro" id="IPR000060">
    <property type="entry name" value="BCCT_transptr"/>
</dbReference>
<dbReference type="PANTHER" id="PTHR30047:SF7">
    <property type="entry name" value="HIGH-AFFINITY CHOLINE TRANSPORT PROTEIN"/>
    <property type="match status" value="1"/>
</dbReference>
<dbReference type="PANTHER" id="PTHR30047">
    <property type="entry name" value="HIGH-AFFINITY CHOLINE TRANSPORT PROTEIN-RELATED"/>
    <property type="match status" value="1"/>
</dbReference>
<dbReference type="Pfam" id="PF02028">
    <property type="entry name" value="BCCT"/>
    <property type="match status" value="1"/>
</dbReference>
<feature type="chain" id="PRO_0000441718" description="Glycine betaine transporter 2">
    <location>
        <begin position="1"/>
        <end position="539"/>
    </location>
</feature>
<feature type="transmembrane region" description="Helical" evidence="1">
    <location>
        <begin position="44"/>
        <end position="64"/>
    </location>
</feature>
<feature type="transmembrane region" description="Helical" evidence="1">
    <location>
        <begin position="85"/>
        <end position="105"/>
    </location>
</feature>
<feature type="transmembrane region" description="Helical" evidence="1">
    <location>
        <begin position="129"/>
        <end position="149"/>
    </location>
</feature>
<feature type="transmembrane region" description="Helical" evidence="1">
    <location>
        <begin position="175"/>
        <end position="195"/>
    </location>
</feature>
<feature type="transmembrane region" description="Helical" evidence="1">
    <location>
        <begin position="231"/>
        <end position="251"/>
    </location>
</feature>
<feature type="transmembrane region" description="Helical" evidence="1">
    <location>
        <begin position="265"/>
        <end position="285"/>
    </location>
</feature>
<feature type="transmembrane region" description="Helical" evidence="1">
    <location>
        <begin position="299"/>
        <end position="319"/>
    </location>
</feature>
<feature type="transmembrane region" description="Helical" evidence="1">
    <location>
        <begin position="348"/>
        <end position="368"/>
    </location>
</feature>
<feature type="transmembrane region" description="Helical" evidence="1">
    <location>
        <begin position="380"/>
        <end position="400"/>
    </location>
</feature>
<feature type="transmembrane region" description="Helical" evidence="1">
    <location>
        <begin position="426"/>
        <end position="446"/>
    </location>
</feature>
<feature type="transmembrane region" description="Helical" evidence="1">
    <location>
        <begin position="480"/>
        <end position="500"/>
    </location>
</feature>
<feature type="transmembrane region" description="Helical" evidence="1">
    <location>
        <begin position="503"/>
        <end position="523"/>
    </location>
</feature>
<sequence length="539" mass="58144">MHGFRALKSEVIMSNMTNAAPHTPIQEADYSAIHPPSLLKRLELTNPVFWLSGSFLSLFVLLALTNTESLTAMVNAGFGFATKYFGAYWQVLLLLNFLIGLALAFGRTGYVRLGGLAKPDIDTFKWLSIVLCTLLAGGGVFWAAAEPIAHFVTAPPLYGEASPKTSAINALSQSFMHWGFLAWAILGCLSSIVLMHLHYDKGLPLKPRTLLYPIFGDKAIHGWIGNLADACSIIAVAAGTIGPIGFLGLQISYALNSLFGFPDNFITQSMVIVAAIVMYTLSALSGVSKGIQLVSRYNIILSVLLIGYILFFGPTSFIIDGYVQGVGRMVDNFFPMALYRDDTGWLSWWTVFFWGWFIGYGPMMAIFIARISRGRTIRQLILSISIAAPLITCFWFSIVGGSGLAFELANPGLISSAFEGFNLPAVLLAITGELPFPMIISVLFLILTTTFIVTTGDSMTYTISVVMTGSAEPNAVIRSFWGLMMGVVAIALISMGSGGITALQSFIVITAVPVSFILLPSILKAPGIANQMAKDQGLV</sequence>
<proteinExistence type="evidence at protein level"/>
<keyword id="KW-0029">Amino-acid transport</keyword>
<keyword id="KW-0997">Cell inner membrane</keyword>
<keyword id="KW-1003">Cell membrane</keyword>
<keyword id="KW-0472">Membrane</keyword>
<keyword id="KW-0346">Stress response</keyword>
<keyword id="KW-0812">Transmembrane</keyword>
<keyword id="KW-1133">Transmembrane helix</keyword>
<keyword id="KW-0813">Transport</keyword>